<feature type="chain" id="PRO_0000138591" description="Peptide methionine sulfoxide reductase MsrA 1">
    <location>
        <begin position="1"/>
        <end position="169"/>
    </location>
</feature>
<feature type="active site" evidence="1">
    <location>
        <position position="12"/>
    </location>
</feature>
<protein>
    <recommendedName>
        <fullName>Peptide methionine sulfoxide reductase MsrA 1</fullName>
        <shortName>Protein-methionine-S-oxide reductase 1</shortName>
        <ecNumber>1.8.4.11</ecNumber>
    </recommendedName>
    <alternativeName>
        <fullName>Peptide-methionine (S)-S-oxide reductase 1</fullName>
        <shortName>Peptide Met(O) reductase 1</shortName>
    </alternativeName>
</protein>
<organism>
    <name type="scientific">Staphylococcus aureus (strain MW2)</name>
    <dbReference type="NCBI Taxonomy" id="196620"/>
    <lineage>
        <taxon>Bacteria</taxon>
        <taxon>Bacillati</taxon>
        <taxon>Bacillota</taxon>
        <taxon>Bacilli</taxon>
        <taxon>Bacillales</taxon>
        <taxon>Staphylococcaceae</taxon>
        <taxon>Staphylococcus</taxon>
    </lineage>
</organism>
<dbReference type="EC" id="1.8.4.11"/>
<dbReference type="EMBL" id="BA000033">
    <property type="protein sequence ID" value="BAB95113.1"/>
    <property type="molecule type" value="Genomic_DNA"/>
</dbReference>
<dbReference type="RefSeq" id="WP_001024830.1">
    <property type="nucleotide sequence ID" value="NC_003923.1"/>
</dbReference>
<dbReference type="SMR" id="P0A083"/>
<dbReference type="KEGG" id="sam:MW1248"/>
<dbReference type="HOGENOM" id="CLU_031040_10_1_9"/>
<dbReference type="GO" id="GO:0033744">
    <property type="term" value="F:L-methionine:thioredoxin-disulfide S-oxidoreductase activity"/>
    <property type="evidence" value="ECO:0007669"/>
    <property type="project" value="RHEA"/>
</dbReference>
<dbReference type="GO" id="GO:0008113">
    <property type="term" value="F:peptide-methionine (S)-S-oxide reductase activity"/>
    <property type="evidence" value="ECO:0007669"/>
    <property type="project" value="UniProtKB-UniRule"/>
</dbReference>
<dbReference type="GO" id="GO:0036211">
    <property type="term" value="P:protein modification process"/>
    <property type="evidence" value="ECO:0007669"/>
    <property type="project" value="UniProtKB-UniRule"/>
</dbReference>
<dbReference type="FunFam" id="3.30.1060.10:FF:000003">
    <property type="entry name" value="Peptide methionine sulfoxide reductase MsrA"/>
    <property type="match status" value="1"/>
</dbReference>
<dbReference type="Gene3D" id="3.30.1060.10">
    <property type="entry name" value="Peptide methionine sulphoxide reductase MsrA"/>
    <property type="match status" value="1"/>
</dbReference>
<dbReference type="HAMAP" id="MF_01401">
    <property type="entry name" value="MsrA"/>
    <property type="match status" value="1"/>
</dbReference>
<dbReference type="InterPro" id="IPR002569">
    <property type="entry name" value="Met_Sox_Rdtase_MsrA_dom"/>
</dbReference>
<dbReference type="InterPro" id="IPR036509">
    <property type="entry name" value="Met_Sox_Rdtase_MsrA_sf"/>
</dbReference>
<dbReference type="NCBIfam" id="TIGR00401">
    <property type="entry name" value="msrA"/>
    <property type="match status" value="1"/>
</dbReference>
<dbReference type="PANTHER" id="PTHR43774">
    <property type="entry name" value="PEPTIDE METHIONINE SULFOXIDE REDUCTASE"/>
    <property type="match status" value="1"/>
</dbReference>
<dbReference type="PANTHER" id="PTHR43774:SF1">
    <property type="entry name" value="PEPTIDE METHIONINE SULFOXIDE REDUCTASE MSRA 2"/>
    <property type="match status" value="1"/>
</dbReference>
<dbReference type="Pfam" id="PF01625">
    <property type="entry name" value="PMSR"/>
    <property type="match status" value="1"/>
</dbReference>
<dbReference type="SUPFAM" id="SSF55068">
    <property type="entry name" value="Peptide methionine sulfoxide reductase"/>
    <property type="match status" value="1"/>
</dbReference>
<proteinExistence type="inferred from homology"/>
<name>MSRA1_STAAW</name>
<accession>P0A083</accession>
<accession>Q99QD5</accession>
<reference key="1">
    <citation type="journal article" date="2002" name="Lancet">
        <title>Genome and virulence determinants of high virulence community-acquired MRSA.</title>
        <authorList>
            <person name="Baba T."/>
            <person name="Takeuchi F."/>
            <person name="Kuroda M."/>
            <person name="Yuzawa H."/>
            <person name="Aoki K."/>
            <person name="Oguchi A."/>
            <person name="Nagai Y."/>
            <person name="Iwama N."/>
            <person name="Asano K."/>
            <person name="Naimi T."/>
            <person name="Kuroda H."/>
            <person name="Cui L."/>
            <person name="Yamamoto K."/>
            <person name="Hiramatsu K."/>
        </authorList>
    </citation>
    <scope>NUCLEOTIDE SEQUENCE [LARGE SCALE GENOMIC DNA]</scope>
    <source>
        <strain>MW2</strain>
    </source>
</reference>
<comment type="function">
    <text evidence="1">Has an important function as a repair enzyme for proteins that have been inactivated by oxidation. Catalyzes the reversible oxidation-reduction of methionine sulfoxide in proteins to methionine (By similarity).</text>
</comment>
<comment type="catalytic activity">
    <reaction>
        <text>L-methionyl-[protein] + [thioredoxin]-disulfide + H2O = L-methionyl-(S)-S-oxide-[protein] + [thioredoxin]-dithiol</text>
        <dbReference type="Rhea" id="RHEA:14217"/>
        <dbReference type="Rhea" id="RHEA-COMP:10698"/>
        <dbReference type="Rhea" id="RHEA-COMP:10700"/>
        <dbReference type="Rhea" id="RHEA-COMP:12313"/>
        <dbReference type="Rhea" id="RHEA-COMP:12315"/>
        <dbReference type="ChEBI" id="CHEBI:15377"/>
        <dbReference type="ChEBI" id="CHEBI:16044"/>
        <dbReference type="ChEBI" id="CHEBI:29950"/>
        <dbReference type="ChEBI" id="CHEBI:44120"/>
        <dbReference type="ChEBI" id="CHEBI:50058"/>
        <dbReference type="EC" id="1.8.4.11"/>
    </reaction>
</comment>
<comment type="catalytic activity">
    <reaction>
        <text>[thioredoxin]-disulfide + L-methionine + H2O = L-methionine (S)-S-oxide + [thioredoxin]-dithiol</text>
        <dbReference type="Rhea" id="RHEA:19993"/>
        <dbReference type="Rhea" id="RHEA-COMP:10698"/>
        <dbReference type="Rhea" id="RHEA-COMP:10700"/>
        <dbReference type="ChEBI" id="CHEBI:15377"/>
        <dbReference type="ChEBI" id="CHEBI:29950"/>
        <dbReference type="ChEBI" id="CHEBI:50058"/>
        <dbReference type="ChEBI" id="CHEBI:57844"/>
        <dbReference type="ChEBI" id="CHEBI:58772"/>
        <dbReference type="EC" id="1.8.4.11"/>
    </reaction>
</comment>
<comment type="similarity">
    <text evidence="2">Belongs to the MsrA Met sulfoxide reductase family.</text>
</comment>
<sequence>MNINTAYFAGGCFWCMTKPFDTFDGIEKVTSGYMGGHIENPTYEQVKSGTSGHLETVEIQYDVALFSYNKLLEIFFSVIDPLDTGGQYQDRGPQYQTAIFYTNDHQKELAETYIEQLKNTINADKAIATKILPASQFYKAEDYHQDFYKKNPERYAEEQKIRQEYKNKQ</sequence>
<keyword id="KW-0560">Oxidoreductase</keyword>
<evidence type="ECO:0000250" key="1"/>
<evidence type="ECO:0000305" key="2"/>
<gene>
    <name type="primary">msrA1</name>
    <name type="synonym">msrA</name>
    <name type="ordered locus">MW1248</name>
</gene>